<evidence type="ECO:0000305" key="1"/>
<reference key="1">
    <citation type="journal article" date="2002" name="J. Bacteriol.">
        <title>Whole-genome comparison of Mycobacterium tuberculosis clinical and laboratory strains.</title>
        <authorList>
            <person name="Fleischmann R.D."/>
            <person name="Alland D."/>
            <person name="Eisen J.A."/>
            <person name="Carpenter L."/>
            <person name="White O."/>
            <person name="Peterson J.D."/>
            <person name="DeBoy R.T."/>
            <person name="Dodson R.J."/>
            <person name="Gwinn M.L."/>
            <person name="Haft D.H."/>
            <person name="Hickey E.K."/>
            <person name="Kolonay J.F."/>
            <person name="Nelson W.C."/>
            <person name="Umayam L.A."/>
            <person name="Ermolaeva M.D."/>
            <person name="Salzberg S.L."/>
            <person name="Delcher A."/>
            <person name="Utterback T.R."/>
            <person name="Weidman J.F."/>
            <person name="Khouri H.M."/>
            <person name="Gill J."/>
            <person name="Mikula A."/>
            <person name="Bishai W."/>
            <person name="Jacobs W.R. Jr."/>
            <person name="Venter J.C."/>
            <person name="Fraser C.M."/>
        </authorList>
    </citation>
    <scope>NUCLEOTIDE SEQUENCE [LARGE SCALE GENOMIC DNA]</scope>
    <source>
        <strain>CDC 1551 / Oshkosh</strain>
    </source>
</reference>
<gene>
    <name type="ordered locus">MT2645</name>
</gene>
<keyword id="KW-1185">Reference proteome</keyword>
<proteinExistence type="predicted"/>
<name>Y2569_MYCTO</name>
<dbReference type="EMBL" id="AE000516">
    <property type="protein sequence ID" value="AAK46958.1"/>
    <property type="molecule type" value="Genomic_DNA"/>
</dbReference>
<dbReference type="PIR" id="H70723">
    <property type="entry name" value="H70723"/>
</dbReference>
<dbReference type="RefSeq" id="WP_003413334.1">
    <property type="nucleotide sequence ID" value="NZ_KK341227.1"/>
</dbReference>
<dbReference type="SMR" id="P9WL92"/>
<dbReference type="KEGG" id="mtc:MT2645"/>
<dbReference type="PATRIC" id="fig|83331.31.peg.2852"/>
<dbReference type="HOGENOM" id="CLU_008973_0_0_11"/>
<dbReference type="Proteomes" id="UP000001020">
    <property type="component" value="Chromosome"/>
</dbReference>
<dbReference type="FunFam" id="3.10.620.30:FF:000007">
    <property type="entry name" value="Transglutaminase domain-containing protein"/>
    <property type="match status" value="1"/>
</dbReference>
<dbReference type="Gene3D" id="3.10.620.30">
    <property type="match status" value="1"/>
</dbReference>
<dbReference type="InterPro" id="IPR013589">
    <property type="entry name" value="Bac_transglu_N"/>
</dbReference>
<dbReference type="InterPro" id="IPR038765">
    <property type="entry name" value="Papain-like_cys_pep_sf"/>
</dbReference>
<dbReference type="InterPro" id="IPR002931">
    <property type="entry name" value="Transglutaminase-like"/>
</dbReference>
<dbReference type="PANTHER" id="PTHR33490:SF7">
    <property type="entry name" value="BLR2979 PROTEIN"/>
    <property type="match status" value="1"/>
</dbReference>
<dbReference type="PANTHER" id="PTHR33490">
    <property type="entry name" value="BLR5614 PROTEIN-RELATED"/>
    <property type="match status" value="1"/>
</dbReference>
<dbReference type="Pfam" id="PF08379">
    <property type="entry name" value="Bact_transglu_N"/>
    <property type="match status" value="1"/>
</dbReference>
<dbReference type="Pfam" id="PF01841">
    <property type="entry name" value="Transglut_core"/>
    <property type="match status" value="1"/>
</dbReference>
<dbReference type="SMART" id="SM00460">
    <property type="entry name" value="TGc"/>
    <property type="match status" value="1"/>
</dbReference>
<dbReference type="SUPFAM" id="SSF54001">
    <property type="entry name" value="Cysteine proteinases"/>
    <property type="match status" value="1"/>
</dbReference>
<comment type="similarity">
    <text evidence="1">To M.leprae ML0607.</text>
</comment>
<protein>
    <recommendedName>
        <fullName>Uncharacterized protein MT2645</fullName>
    </recommendedName>
</protein>
<sequence length="314" mass="34397">MSADSSLSLPLSGTHRYRVTHRTEYRYSDVVTSSYGRGFLTPRNSLRQRCVAHRLTIDPAPADRSTSRDGYGNISSYFHVTEPHRTLTITSDSIVDVSPPPPGLYTSGPALQPWEAARPAGLPGSLATEFTLDLNPPEITDAVREYAAPSFLPKRPLVEVLRDLASRIYTDFTYRSGSTTISTGVNEVLLAREGVCQDFARLAIACLRANGLAACYVSGYLATDPPPGKDRMIGIDATHAWASVWTPQQPGRFEWLGLDPTNDQLVDQRYIVVGRGRDYADVPPLRGIIYTNSENSVIDVSVDVVPFEGDALHA</sequence>
<accession>P9WL92</accession>
<accession>L0TA23</accession>
<accession>P0A5G5</accession>
<accession>Q50652</accession>
<feature type="chain" id="PRO_0000427519" description="Uncharacterized protein MT2645">
    <location>
        <begin position="1"/>
        <end position="314"/>
    </location>
</feature>
<organism>
    <name type="scientific">Mycobacterium tuberculosis (strain CDC 1551 / Oshkosh)</name>
    <dbReference type="NCBI Taxonomy" id="83331"/>
    <lineage>
        <taxon>Bacteria</taxon>
        <taxon>Bacillati</taxon>
        <taxon>Actinomycetota</taxon>
        <taxon>Actinomycetes</taxon>
        <taxon>Mycobacteriales</taxon>
        <taxon>Mycobacteriaceae</taxon>
        <taxon>Mycobacterium</taxon>
        <taxon>Mycobacterium tuberculosis complex</taxon>
    </lineage>
</organism>